<sequence>MSAASLIPVSSLPSLASPFKGNVKTLVAKPCLCPCLKIQRTKLRVSVVNKAASAYNVKSSGENVRFRLDNLGPQPGSRKRPKRKGRGIAAGQGASCGFGMRGQKSRSGPGIMRGFEGGQMPLYRRLPKLRGIAGGMHAGLPKYVNVNLTDIENAGFQDGEEVSLETLKAKRVINPSGRERKLPLKILADGELSKKLTIKAGAFSTSAKEKLEYAGCSLIVLPGRKKWVKPSVAKNLARAEEYFAKKRGGETASEPAPV</sequence>
<reference key="1">
    <citation type="journal article" date="1992" name="Plant Mol. Biol.">
        <title>Characterization of rps17, rp19 and rpl15: three nucleus-encoded plastid ribosomal protein genes.</title>
        <authorList>
            <person name="Thompson M.D."/>
            <person name="Jacks C.M."/>
            <person name="Lenvik T.R."/>
            <person name="Gantt J.S."/>
        </authorList>
    </citation>
    <scope>NUCLEOTIDE SEQUENCE [MRNA]</scope>
    <source>
        <strain>cv. Little Marvel</strain>
        <tissue>Leaf</tissue>
    </source>
</reference>
<keyword id="KW-0150">Chloroplast</keyword>
<keyword id="KW-0934">Plastid</keyword>
<keyword id="KW-0687">Ribonucleoprotein</keyword>
<keyword id="KW-0689">Ribosomal protein</keyword>
<keyword id="KW-0809">Transit peptide</keyword>
<dbReference type="EMBL" id="Z11510">
    <property type="protein sequence ID" value="CAA77595.1"/>
    <property type="molecule type" value="mRNA"/>
</dbReference>
<dbReference type="PIR" id="S18001">
    <property type="entry name" value="S18001"/>
</dbReference>
<dbReference type="SMR" id="P31165"/>
<dbReference type="EnsemblPlants" id="Psat6g225000.1">
    <property type="protein sequence ID" value="Psat6g225000.1.cds"/>
    <property type="gene ID" value="Psat6g225000"/>
</dbReference>
<dbReference type="Gramene" id="Psat6g225000.1">
    <property type="protein sequence ID" value="Psat6g225000.1.cds"/>
    <property type="gene ID" value="Psat6g225000"/>
</dbReference>
<dbReference type="OrthoDB" id="361383at2759"/>
<dbReference type="GO" id="GO:0009507">
    <property type="term" value="C:chloroplast"/>
    <property type="evidence" value="ECO:0007669"/>
    <property type="project" value="UniProtKB-SubCell"/>
</dbReference>
<dbReference type="GO" id="GO:0022625">
    <property type="term" value="C:cytosolic large ribosomal subunit"/>
    <property type="evidence" value="ECO:0007669"/>
    <property type="project" value="TreeGrafter"/>
</dbReference>
<dbReference type="GO" id="GO:0003729">
    <property type="term" value="F:mRNA binding"/>
    <property type="evidence" value="ECO:0007669"/>
    <property type="project" value="UniProtKB-ARBA"/>
</dbReference>
<dbReference type="GO" id="GO:0003735">
    <property type="term" value="F:structural constituent of ribosome"/>
    <property type="evidence" value="ECO:0007669"/>
    <property type="project" value="InterPro"/>
</dbReference>
<dbReference type="GO" id="GO:0006412">
    <property type="term" value="P:translation"/>
    <property type="evidence" value="ECO:0007669"/>
    <property type="project" value="InterPro"/>
</dbReference>
<dbReference type="Gene3D" id="3.100.10.10">
    <property type="match status" value="1"/>
</dbReference>
<dbReference type="HAMAP" id="MF_01341">
    <property type="entry name" value="Ribosomal_uL15"/>
    <property type="match status" value="1"/>
</dbReference>
<dbReference type="InterPro" id="IPR030878">
    <property type="entry name" value="Ribosomal_uL15"/>
</dbReference>
<dbReference type="InterPro" id="IPR021131">
    <property type="entry name" value="Ribosomal_uL15/eL18"/>
</dbReference>
<dbReference type="InterPro" id="IPR036227">
    <property type="entry name" value="Ribosomal_uL15/eL18_sf"/>
</dbReference>
<dbReference type="InterPro" id="IPR005749">
    <property type="entry name" value="Ribosomal_uL15_bac-type"/>
</dbReference>
<dbReference type="InterPro" id="IPR001196">
    <property type="entry name" value="Ribosomal_uL15_CS"/>
</dbReference>
<dbReference type="NCBIfam" id="TIGR01071">
    <property type="entry name" value="rplO_bact"/>
    <property type="match status" value="1"/>
</dbReference>
<dbReference type="PANTHER" id="PTHR12934">
    <property type="entry name" value="50S RIBOSOMAL PROTEIN L15"/>
    <property type="match status" value="1"/>
</dbReference>
<dbReference type="PANTHER" id="PTHR12934:SF11">
    <property type="entry name" value="LARGE RIBOSOMAL SUBUNIT PROTEIN UL15M"/>
    <property type="match status" value="1"/>
</dbReference>
<dbReference type="Pfam" id="PF00828">
    <property type="entry name" value="Ribosomal_L27A"/>
    <property type="match status" value="1"/>
</dbReference>
<dbReference type="SUPFAM" id="SSF52080">
    <property type="entry name" value="Ribosomal proteins L15p and L18e"/>
    <property type="match status" value="1"/>
</dbReference>
<dbReference type="PROSITE" id="PS00475">
    <property type="entry name" value="RIBOSOMAL_L15"/>
    <property type="match status" value="1"/>
</dbReference>
<organism>
    <name type="scientific">Pisum sativum</name>
    <name type="common">Garden pea</name>
    <name type="synonym">Lathyrus oleraceus</name>
    <dbReference type="NCBI Taxonomy" id="3888"/>
    <lineage>
        <taxon>Eukaryota</taxon>
        <taxon>Viridiplantae</taxon>
        <taxon>Streptophyta</taxon>
        <taxon>Embryophyta</taxon>
        <taxon>Tracheophyta</taxon>
        <taxon>Spermatophyta</taxon>
        <taxon>Magnoliopsida</taxon>
        <taxon>eudicotyledons</taxon>
        <taxon>Gunneridae</taxon>
        <taxon>Pentapetalae</taxon>
        <taxon>rosids</taxon>
        <taxon>fabids</taxon>
        <taxon>Fabales</taxon>
        <taxon>Fabaceae</taxon>
        <taxon>Papilionoideae</taxon>
        <taxon>50 kb inversion clade</taxon>
        <taxon>NPAAA clade</taxon>
        <taxon>Hologalegina</taxon>
        <taxon>IRL clade</taxon>
        <taxon>Fabeae</taxon>
        <taxon>Pisum</taxon>
    </lineage>
</organism>
<name>RK15_PEA</name>
<protein>
    <recommendedName>
        <fullName evidence="3">Large ribosomal subunit protein uL15c</fullName>
    </recommendedName>
    <alternativeName>
        <fullName>50S ribosomal protein L15, chloroplastic</fullName>
    </alternativeName>
    <alternativeName>
        <fullName>CL15</fullName>
    </alternativeName>
</protein>
<accession>P31165</accession>
<comment type="subunit">
    <text>Part of the 50S ribosomal subunit.</text>
</comment>
<comment type="subcellular location">
    <subcellularLocation>
        <location>Plastid</location>
        <location>Chloroplast</location>
    </subcellularLocation>
</comment>
<comment type="similarity">
    <text evidence="3">Belongs to the universal ribosomal protein uL15 family.</text>
</comment>
<gene>
    <name type="primary">RPL15</name>
</gene>
<evidence type="ECO:0000255" key="1"/>
<evidence type="ECO:0000256" key="2">
    <source>
        <dbReference type="SAM" id="MobiDB-lite"/>
    </source>
</evidence>
<evidence type="ECO:0000305" key="3"/>
<proteinExistence type="evidence at transcript level"/>
<feature type="transit peptide" description="Chloroplast" evidence="1">
    <location>
        <begin position="1" status="less than"/>
        <end position="65"/>
    </location>
</feature>
<feature type="chain" id="PRO_0000030467" description="Large ribosomal subunit protein uL15c">
    <location>
        <begin position="66"/>
        <end position="258"/>
    </location>
</feature>
<feature type="region of interest" description="Disordered" evidence="2">
    <location>
        <begin position="67"/>
        <end position="90"/>
    </location>
</feature>
<feature type="compositionally biased region" description="Basic residues" evidence="2">
    <location>
        <begin position="77"/>
        <end position="86"/>
    </location>
</feature>
<feature type="non-terminal residue">
    <location>
        <position position="1"/>
    </location>
</feature>